<proteinExistence type="inferred from homology"/>
<sequence length="485" mass="53363">MNSVSPSAVQYIVGGGAHEDKASASSKRHLGHGAVPDGIREGSGEPDEVDRLKAKFMSAWNNVKYGWTVKSKTSFNKSSPLILLGQSFLFNNEDEVERFRQTFVSCVWLTYRREFPQLDGSSLTTDCGWGCMLRSGQMMLAQGLLLHLMPTDWRWSDCHALTDVDFEVLKPRSPSRPAGMSMPSFSSSWSSSIPQINPSPGITEAHRRAPARCPSASPDPQVDALHRKVVSCFGDHPSAPFGVHQLVELGKESGKRAGDWYGPSVVAHMLRKAVARAAEFEDLAVYVAQDCTVYKEDVMSLCESSGVGWKSVVILVPVRLGGESLNPSYIECVKNILKLKCCIGIIGGKPKHSLFFVGFQDEQLLYLDPHYCQPVVDVTQANFSLESFHCNSPRKMNFSRMDPSCTIGLYARSKTDFESLCTAVSEALSSSKEKYPIFTFVEGRGQIYGMEGPSGGSVDAPAHIFTCSRLSRNNKRGSTDEFVLL</sequence>
<keyword id="KW-0072">Autophagy</keyword>
<keyword id="KW-0963">Cytoplasm</keyword>
<keyword id="KW-0378">Hydrolase</keyword>
<keyword id="KW-0645">Protease</keyword>
<keyword id="KW-0653">Protein transport</keyword>
<keyword id="KW-1185">Reference proteome</keyword>
<keyword id="KW-0788">Thiol protease</keyword>
<keyword id="KW-0813">Transport</keyword>
<feature type="chain" id="PRO_0000454237" description="Cysteine protease atg4da">
    <location>
        <begin position="1"/>
        <end position="485"/>
    </location>
</feature>
<feature type="region of interest" description="Disordered" evidence="3">
    <location>
        <begin position="22"/>
        <end position="46"/>
    </location>
</feature>
<feature type="active site" description="Nucleophile" evidence="2">
    <location>
        <position position="131"/>
    </location>
</feature>
<feature type="active site" evidence="2">
    <location>
        <position position="368"/>
    </location>
</feature>
<feature type="active site" evidence="2">
    <location>
        <position position="370"/>
    </location>
</feature>
<accession>R4GER2</accession>
<organism>
    <name type="scientific">Danio rerio</name>
    <name type="common">Zebrafish</name>
    <name type="synonym">Brachydanio rerio</name>
    <dbReference type="NCBI Taxonomy" id="7955"/>
    <lineage>
        <taxon>Eukaryota</taxon>
        <taxon>Metazoa</taxon>
        <taxon>Chordata</taxon>
        <taxon>Craniata</taxon>
        <taxon>Vertebrata</taxon>
        <taxon>Euteleostomi</taxon>
        <taxon>Actinopterygii</taxon>
        <taxon>Neopterygii</taxon>
        <taxon>Teleostei</taxon>
        <taxon>Ostariophysi</taxon>
        <taxon>Cypriniformes</taxon>
        <taxon>Danionidae</taxon>
        <taxon>Danioninae</taxon>
        <taxon>Danio</taxon>
    </lineage>
</organism>
<evidence type="ECO:0000250" key="1">
    <source>
        <dbReference type="UniProtKB" id="Q86TL0"/>
    </source>
</evidence>
<evidence type="ECO:0000250" key="2">
    <source>
        <dbReference type="UniProtKB" id="Q9Y4P1"/>
    </source>
</evidence>
<evidence type="ECO:0000256" key="3">
    <source>
        <dbReference type="SAM" id="MobiDB-lite"/>
    </source>
</evidence>
<evidence type="ECO:0000269" key="4">
    <source>
    </source>
</evidence>
<evidence type="ECO:0000305" key="5"/>
<evidence type="ECO:0000312" key="6">
    <source>
        <dbReference type="ZFIN" id="ZDB-GENE-041111-102"/>
    </source>
</evidence>
<comment type="function">
    <text evidence="1 2 4">Cysteine protease that plays a key role in autophagy by mediating both proteolytic activation and delipidation of ATG8 family proteins (By similarity). The protease activity is required for proteolytic activation of ATG8 family proteins to reveal a C-terminal glycine (By similarity). Exposure of the glycine at the C-terminus is essential for ATG8 proteins conjugation to phosphatidylethanolamine (PE) and insertion to membranes, which is necessary for autophagy (By similarity). In addition to the protease activity, also mediates delipidation of ATG8 family proteins. Catalyzes delipidation of PE-conjugated forms of ATG8 proteins during macroautophagy (By similarity). Also involved in non-canonical autophagy, a parallel pathway involving conjugation of ATG8 proteins to single membranes at endolysosomal compartments, by catalyzing delipidation of ATG8 proteins conjugated to phosphatidylserine (PS) (By similarity). ATG4D plays a role in the autophagy-mediated neuronal homeostasis in the central nervous system (PubMed:25875846).</text>
</comment>
<comment type="catalytic activity">
    <reaction evidence="1">
        <text>[protein]-C-terminal L-amino acid-glycyl-phosphatidylethanolamide + H2O = [protein]-C-terminal L-amino acid-glycine + a 1,2-diacyl-sn-glycero-3-phosphoethanolamine</text>
        <dbReference type="Rhea" id="RHEA:67548"/>
        <dbReference type="Rhea" id="RHEA-COMP:17323"/>
        <dbReference type="Rhea" id="RHEA-COMP:17324"/>
        <dbReference type="ChEBI" id="CHEBI:15377"/>
        <dbReference type="ChEBI" id="CHEBI:64612"/>
        <dbReference type="ChEBI" id="CHEBI:172940"/>
        <dbReference type="ChEBI" id="CHEBI:172941"/>
    </reaction>
    <physiologicalReaction direction="left-to-right" evidence="1">
        <dbReference type="Rhea" id="RHEA:67549"/>
    </physiologicalReaction>
</comment>
<comment type="catalytic activity">
    <reaction evidence="1">
        <text>[protein]-C-terminal L-amino acid-glycyl-phosphatidylserine + H2O = [protein]-C-terminal L-amino acid-glycine + a 1,2-diacyl-sn-glycero-3-phospho-L-serine</text>
        <dbReference type="Rhea" id="RHEA:67576"/>
        <dbReference type="Rhea" id="RHEA-COMP:17324"/>
        <dbReference type="Rhea" id="RHEA-COMP:17326"/>
        <dbReference type="ChEBI" id="CHEBI:15377"/>
        <dbReference type="ChEBI" id="CHEBI:57262"/>
        <dbReference type="ChEBI" id="CHEBI:172940"/>
        <dbReference type="ChEBI" id="CHEBI:172942"/>
    </reaction>
    <physiologicalReaction direction="left-to-right" evidence="1">
        <dbReference type="Rhea" id="RHEA:67577"/>
    </physiologicalReaction>
</comment>
<comment type="subcellular location">
    <subcellularLocation>
        <location evidence="1">Cytoplasm</location>
    </subcellularLocation>
</comment>
<comment type="disruption phenotype">
    <text evidence="4">Morpholino knockdown of the protein results in neurodegeneration in the central nervous system (CNS) (PubMed:25875846). Neurodegeneration is characterized by severe visible malformations in the developing CNS in regions that correspond to the midbrain-hindbrain boundary, the cerebellum and the hindbrain region (PubMed:25875846).</text>
</comment>
<comment type="similarity">
    <text evidence="5">Belongs to the peptidase C54 family.</text>
</comment>
<gene>
    <name evidence="6" type="primary">atg4da</name>
    <name evidence="6" type="synonym">si:ch211-212h16.5</name>
</gene>
<name>ATG4D_DANRE</name>
<reference key="1">
    <citation type="journal article" date="2013" name="Nature">
        <title>The zebrafish reference genome sequence and its relationship to the human genome.</title>
        <authorList>
            <person name="Howe K."/>
            <person name="Clark M.D."/>
            <person name="Torroja C.F."/>
            <person name="Torrance J."/>
            <person name="Berthelot C."/>
            <person name="Muffato M."/>
            <person name="Collins J.E."/>
            <person name="Humphray S."/>
            <person name="McLaren K."/>
            <person name="Matthews L."/>
            <person name="McLaren S."/>
            <person name="Sealy I."/>
            <person name="Caccamo M."/>
            <person name="Churcher C."/>
            <person name="Scott C."/>
            <person name="Barrett J.C."/>
            <person name="Koch R."/>
            <person name="Rauch G.J."/>
            <person name="White S."/>
            <person name="Chow W."/>
            <person name="Kilian B."/>
            <person name="Quintais L.T."/>
            <person name="Guerra-Assuncao J.A."/>
            <person name="Zhou Y."/>
            <person name="Gu Y."/>
            <person name="Yen J."/>
            <person name="Vogel J.H."/>
            <person name="Eyre T."/>
            <person name="Redmond S."/>
            <person name="Banerjee R."/>
            <person name="Chi J."/>
            <person name="Fu B."/>
            <person name="Langley E."/>
            <person name="Maguire S.F."/>
            <person name="Laird G.K."/>
            <person name="Lloyd D."/>
            <person name="Kenyon E."/>
            <person name="Donaldson S."/>
            <person name="Sehra H."/>
            <person name="Almeida-King J."/>
            <person name="Loveland J."/>
            <person name="Trevanion S."/>
            <person name="Jones M."/>
            <person name="Quail M."/>
            <person name="Willey D."/>
            <person name="Hunt A."/>
            <person name="Burton J."/>
            <person name="Sims S."/>
            <person name="McLay K."/>
            <person name="Plumb B."/>
            <person name="Davis J."/>
            <person name="Clee C."/>
            <person name="Oliver K."/>
            <person name="Clark R."/>
            <person name="Riddle C."/>
            <person name="Elliot D."/>
            <person name="Threadgold G."/>
            <person name="Harden G."/>
            <person name="Ware D."/>
            <person name="Begum S."/>
            <person name="Mortimore B."/>
            <person name="Kerry G."/>
            <person name="Heath P."/>
            <person name="Phillimore B."/>
            <person name="Tracey A."/>
            <person name="Corby N."/>
            <person name="Dunn M."/>
            <person name="Johnson C."/>
            <person name="Wood J."/>
            <person name="Clark S."/>
            <person name="Pelan S."/>
            <person name="Griffiths G."/>
            <person name="Smith M."/>
            <person name="Glithero R."/>
            <person name="Howden P."/>
            <person name="Barker N."/>
            <person name="Lloyd C."/>
            <person name="Stevens C."/>
            <person name="Harley J."/>
            <person name="Holt K."/>
            <person name="Panagiotidis G."/>
            <person name="Lovell J."/>
            <person name="Beasley H."/>
            <person name="Henderson C."/>
            <person name="Gordon D."/>
            <person name="Auger K."/>
            <person name="Wright D."/>
            <person name="Collins J."/>
            <person name="Raisen C."/>
            <person name="Dyer L."/>
            <person name="Leung K."/>
            <person name="Robertson L."/>
            <person name="Ambridge K."/>
            <person name="Leongamornlert D."/>
            <person name="McGuire S."/>
            <person name="Gilderthorp R."/>
            <person name="Griffiths C."/>
            <person name="Manthravadi D."/>
            <person name="Nichol S."/>
            <person name="Barker G."/>
            <person name="Whitehead S."/>
            <person name="Kay M."/>
            <person name="Brown J."/>
            <person name="Murnane C."/>
            <person name="Gray E."/>
            <person name="Humphries M."/>
            <person name="Sycamore N."/>
            <person name="Barker D."/>
            <person name="Saunders D."/>
            <person name="Wallis J."/>
            <person name="Babbage A."/>
            <person name="Hammond S."/>
            <person name="Mashreghi-Mohammadi M."/>
            <person name="Barr L."/>
            <person name="Martin S."/>
            <person name="Wray P."/>
            <person name="Ellington A."/>
            <person name="Matthews N."/>
            <person name="Ellwood M."/>
            <person name="Woodmansey R."/>
            <person name="Clark G."/>
            <person name="Cooper J."/>
            <person name="Tromans A."/>
            <person name="Grafham D."/>
            <person name="Skuce C."/>
            <person name="Pandian R."/>
            <person name="Andrews R."/>
            <person name="Harrison E."/>
            <person name="Kimberley A."/>
            <person name="Garnett J."/>
            <person name="Fosker N."/>
            <person name="Hall R."/>
            <person name="Garner P."/>
            <person name="Kelly D."/>
            <person name="Bird C."/>
            <person name="Palmer S."/>
            <person name="Gehring I."/>
            <person name="Berger A."/>
            <person name="Dooley C.M."/>
            <person name="Ersan-Urun Z."/>
            <person name="Eser C."/>
            <person name="Geiger H."/>
            <person name="Geisler M."/>
            <person name="Karotki L."/>
            <person name="Kirn A."/>
            <person name="Konantz J."/>
            <person name="Konantz M."/>
            <person name="Oberlander M."/>
            <person name="Rudolph-Geiger S."/>
            <person name="Teucke M."/>
            <person name="Lanz C."/>
            <person name="Raddatz G."/>
            <person name="Osoegawa K."/>
            <person name="Zhu B."/>
            <person name="Rapp A."/>
            <person name="Widaa S."/>
            <person name="Langford C."/>
            <person name="Yang F."/>
            <person name="Schuster S.C."/>
            <person name="Carter N.P."/>
            <person name="Harrow J."/>
            <person name="Ning Z."/>
            <person name="Herrero J."/>
            <person name="Searle S.M."/>
            <person name="Enright A."/>
            <person name="Geisler R."/>
            <person name="Plasterk R.H."/>
            <person name="Lee C."/>
            <person name="Westerfield M."/>
            <person name="de Jong P.J."/>
            <person name="Zon L.I."/>
            <person name="Postlethwait J.H."/>
            <person name="Nusslein-Volhard C."/>
            <person name="Hubbard T.J."/>
            <person name="Roest Crollius H."/>
            <person name="Rogers J."/>
            <person name="Stemple D.L."/>
        </authorList>
    </citation>
    <scope>NUCLEOTIDE SEQUENCE [LARGE SCALE GENOMIC DNA]</scope>
    <source>
        <strain>Tuebingen</strain>
    </source>
</reference>
<reference key="2">
    <citation type="journal article" date="2015" name="PLoS Genet.">
        <title>A missense change in the ATG4D gene links aberrant autophagy to a neurodegenerative vacuolar storage disease.</title>
        <authorList>
            <person name="Kyoestilae K."/>
            <person name="Syrjae P."/>
            <person name="Jagannathan V."/>
            <person name="Chandrasekar G."/>
            <person name="Jokinen T.S."/>
            <person name="Seppaelae E.H."/>
            <person name="Becker D."/>
            <person name="Droegemueller M."/>
            <person name="Dietschi E."/>
            <person name="Droegemueller C."/>
            <person name="Lang J."/>
            <person name="Steffen F."/>
            <person name="Rohdin C."/>
            <person name="Jaederlund K.H."/>
            <person name="Lappalainen A.K."/>
            <person name="Hahn K."/>
            <person name="Wohlsein P."/>
            <person name="Baumgaertner W."/>
            <person name="Henke D."/>
            <person name="Oevermann A."/>
            <person name="Kere J."/>
            <person name="Lohi H."/>
            <person name="Leeb T."/>
        </authorList>
    </citation>
    <scope>FUNCTION</scope>
    <scope>DISRUPTION PHENOTYPE</scope>
</reference>
<dbReference type="EC" id="3.4.22.-" evidence="1"/>
<dbReference type="EMBL" id="BX547996">
    <property type="status" value="NOT_ANNOTATED_CDS"/>
    <property type="molecule type" value="Genomic_DNA"/>
</dbReference>
<dbReference type="RefSeq" id="NP_001410735.1">
    <property type="nucleotide sequence ID" value="NM_001423806.1"/>
</dbReference>
<dbReference type="RefSeq" id="XP_009292711.1">
    <property type="nucleotide sequence ID" value="XM_009294436.2"/>
</dbReference>
<dbReference type="RefSeq" id="XP_009292712.1">
    <property type="nucleotide sequence ID" value="XM_009294437.4"/>
</dbReference>
<dbReference type="RefSeq" id="XP_021332978.1">
    <property type="nucleotide sequence ID" value="XM_021477303.2"/>
</dbReference>
<dbReference type="SMR" id="R4GER2"/>
<dbReference type="FunCoup" id="R4GER2">
    <property type="interactions" value="696"/>
</dbReference>
<dbReference type="STRING" id="7955.ENSDARP00000126975"/>
<dbReference type="PaxDb" id="7955-ENSDARP00000126975"/>
<dbReference type="Ensembl" id="ENSDART00000152289">
    <property type="protein sequence ID" value="ENSDARP00000126975"/>
    <property type="gene ID" value="ENSDARG00000043548"/>
</dbReference>
<dbReference type="GeneID" id="795933"/>
<dbReference type="AGR" id="ZFIN:ZDB-GENE-041111-102"/>
<dbReference type="CTD" id="795933"/>
<dbReference type="ZFIN" id="ZDB-GENE-041111-102">
    <property type="gene designation" value="atg4da"/>
</dbReference>
<dbReference type="InParanoid" id="R4GER2"/>
<dbReference type="OMA" id="MPRDWAW"/>
<dbReference type="OrthoDB" id="2960936at2759"/>
<dbReference type="Reactome" id="R-DRE-1632852">
    <property type="pathway name" value="Macroautophagy"/>
</dbReference>
<dbReference type="PRO" id="PR:R4GER2"/>
<dbReference type="Proteomes" id="UP000000437">
    <property type="component" value="Chromosome 1"/>
</dbReference>
<dbReference type="Bgee" id="ENSDARG00000043548">
    <property type="expression patterns" value="Expressed in early embryo and 21 other cell types or tissues"/>
</dbReference>
<dbReference type="ExpressionAtlas" id="R4GER2">
    <property type="expression patterns" value="baseline and differential"/>
</dbReference>
<dbReference type="GO" id="GO:0005737">
    <property type="term" value="C:cytoplasm"/>
    <property type="evidence" value="ECO:0000318"/>
    <property type="project" value="GO_Central"/>
</dbReference>
<dbReference type="GO" id="GO:0004197">
    <property type="term" value="F:cysteine-type endopeptidase activity"/>
    <property type="evidence" value="ECO:0000318"/>
    <property type="project" value="GO_Central"/>
</dbReference>
<dbReference type="GO" id="GO:0019786">
    <property type="term" value="F:protein-phosphatidylethanolamide deconjugating activity"/>
    <property type="evidence" value="ECO:0000318"/>
    <property type="project" value="GO_Central"/>
</dbReference>
<dbReference type="GO" id="GO:0035973">
    <property type="term" value="P:aggrephagy"/>
    <property type="evidence" value="ECO:0000318"/>
    <property type="project" value="GO_Central"/>
</dbReference>
<dbReference type="GO" id="GO:0000045">
    <property type="term" value="P:autophagosome assembly"/>
    <property type="evidence" value="ECO:0000318"/>
    <property type="project" value="GO_Central"/>
</dbReference>
<dbReference type="GO" id="GO:0098749">
    <property type="term" value="P:cerebellar neuron development"/>
    <property type="evidence" value="ECO:0000315"/>
    <property type="project" value="ZFIN"/>
</dbReference>
<dbReference type="GO" id="GO:0021702">
    <property type="term" value="P:cerebellar Purkinje cell differentiation"/>
    <property type="evidence" value="ECO:0000315"/>
    <property type="project" value="ZFIN"/>
</dbReference>
<dbReference type="GO" id="GO:0000423">
    <property type="term" value="P:mitophagy"/>
    <property type="evidence" value="ECO:0000318"/>
    <property type="project" value="GO_Central"/>
</dbReference>
<dbReference type="GO" id="GO:0034727">
    <property type="term" value="P:piecemeal microautophagy of the nucleus"/>
    <property type="evidence" value="ECO:0000318"/>
    <property type="project" value="GO_Central"/>
</dbReference>
<dbReference type="GO" id="GO:0016485">
    <property type="term" value="P:protein processing"/>
    <property type="evidence" value="ECO:0000318"/>
    <property type="project" value="GO_Central"/>
</dbReference>
<dbReference type="GO" id="GO:0015031">
    <property type="term" value="P:protein transport"/>
    <property type="evidence" value="ECO:0007669"/>
    <property type="project" value="UniProtKB-KW"/>
</dbReference>
<dbReference type="InterPro" id="IPR038765">
    <property type="entry name" value="Papain-like_cys_pep_sf"/>
</dbReference>
<dbReference type="InterPro" id="IPR005078">
    <property type="entry name" value="Peptidase_C54"/>
</dbReference>
<dbReference type="InterPro" id="IPR046792">
    <property type="entry name" value="Peptidase_C54_cat"/>
</dbReference>
<dbReference type="PANTHER" id="PTHR22624">
    <property type="entry name" value="CYSTEINE PROTEASE ATG4"/>
    <property type="match status" value="1"/>
</dbReference>
<dbReference type="PANTHER" id="PTHR22624:SF36">
    <property type="entry name" value="CYSTEINE PROTEASE ATG4D"/>
    <property type="match status" value="1"/>
</dbReference>
<dbReference type="Pfam" id="PF03416">
    <property type="entry name" value="Peptidase_C54"/>
    <property type="match status" value="1"/>
</dbReference>
<dbReference type="SUPFAM" id="SSF54001">
    <property type="entry name" value="Cysteine proteinases"/>
    <property type="match status" value="1"/>
</dbReference>
<protein>
    <recommendedName>
        <fullName evidence="5">Cysteine protease atg4da</fullName>
        <ecNumber evidence="1">3.4.22.-</ecNumber>
    </recommendedName>
    <alternativeName>
        <fullName evidence="1">Autophagy-related protein 4 homolog D-A</fullName>
    </alternativeName>
</protein>